<dbReference type="EMBL" id="CP000521">
    <property type="protein sequence ID" value="ABO11181.1"/>
    <property type="molecule type" value="Genomic_DNA"/>
</dbReference>
<dbReference type="SMR" id="A3M2N7"/>
<dbReference type="KEGG" id="acb:A1S_0741"/>
<dbReference type="HOGENOM" id="CLU_165974_0_0_6"/>
<dbReference type="InterPro" id="IPR031409">
    <property type="entry name" value="Darcynin"/>
</dbReference>
<dbReference type="Pfam" id="PF17074">
    <property type="entry name" value="Darcynin"/>
    <property type="match status" value="1"/>
</dbReference>
<name>DARC1_ACIBT</name>
<reference key="1">
    <citation type="journal article" date="2007" name="Genes Dev.">
        <title>New insights into Acinetobacter baumannii pathogenesis revealed by high-density pyrosequencing and transposon mutagenesis.</title>
        <authorList>
            <person name="Smith M.G."/>
            <person name="Gianoulis T.A."/>
            <person name="Pukatzki S."/>
            <person name="Mekalanos J.J."/>
            <person name="Ornston L.N."/>
            <person name="Gerstein M."/>
            <person name="Snyder M."/>
        </authorList>
    </citation>
    <scope>NUCLEOTIDE SEQUENCE [LARGE SCALE GENOMIC DNA]</scope>
    <source>
        <strain>ATCC 17978 / DSM 105126 / CIP 53.77 / LMG 1025 / NCDC KC755 / 5377</strain>
    </source>
</reference>
<comment type="similarity">
    <text evidence="1">Belongs to the darcynin family.</text>
</comment>
<protein>
    <recommendedName>
        <fullName>Darcynin 1</fullName>
    </recommendedName>
</protein>
<feature type="chain" id="PRO_0000305228" description="Darcynin 1">
    <location>
        <begin position="1"/>
        <end position="90"/>
    </location>
</feature>
<sequence>MALAREKRAEFSAQKLEPIFEKYPSVKVRWYDVEAFSTKASDIAVFETTSLQDYYFVIDAIRDSEFCTVPYFEFVEIIPAIEDGYVEYES</sequence>
<proteinExistence type="inferred from homology"/>
<evidence type="ECO:0000305" key="1"/>
<gene>
    <name type="ordered locus">A1S_0741</name>
</gene>
<accession>A3M2N7</accession>
<organism>
    <name type="scientific">Acinetobacter baumannii (strain ATCC 17978 / DSM 105126 / CIP 53.77 / LMG 1025 / NCDC KC755 / 5377)</name>
    <dbReference type="NCBI Taxonomy" id="400667"/>
    <lineage>
        <taxon>Bacteria</taxon>
        <taxon>Pseudomonadati</taxon>
        <taxon>Pseudomonadota</taxon>
        <taxon>Gammaproteobacteria</taxon>
        <taxon>Moraxellales</taxon>
        <taxon>Moraxellaceae</taxon>
        <taxon>Acinetobacter</taxon>
        <taxon>Acinetobacter calcoaceticus/baumannii complex</taxon>
    </lineage>
</organism>